<sequence>MQQTASVNMQDFGYVEQFLDAMWMERGLAENTLASYRNDLMKLLQWMEANHYRLDFISLSGLQQYQSYLVDQDYKQTSRARMLSAIRRLFQYLHREKVRADDPSALLVSPKLPQRLPKDISEEQVDALLDAPDPNDPVELRDKAMLELLYATGLRVTELVSLTMENISLRQGVVRVTGKGGKERLVPMGENAIDWIETFIKQGRPALLGETSSDVVFPSKRARQMTRQTFWHRIKFYAVIAGIDTDHLSPHVLRHAFATHLLNYGADLRVVQMLLGHSDLSTTQIYTHVATERLKQIHSQHHPRA</sequence>
<organism>
    <name type="scientific">Vibrio vulnificus (strain CMCP6)</name>
    <dbReference type="NCBI Taxonomy" id="216895"/>
    <lineage>
        <taxon>Bacteria</taxon>
        <taxon>Pseudomonadati</taxon>
        <taxon>Pseudomonadota</taxon>
        <taxon>Gammaproteobacteria</taxon>
        <taxon>Vibrionales</taxon>
        <taxon>Vibrionaceae</taxon>
        <taxon>Vibrio</taxon>
    </lineage>
</organism>
<feature type="chain" id="PRO_0000095428" description="Tyrosine recombinase XerD">
    <location>
        <begin position="1"/>
        <end position="305"/>
    </location>
</feature>
<feature type="domain" description="Core-binding (CB)" evidence="3">
    <location>
        <begin position="9"/>
        <end position="94"/>
    </location>
</feature>
<feature type="domain" description="Tyr recombinase" evidence="2">
    <location>
        <begin position="115"/>
        <end position="299"/>
    </location>
</feature>
<feature type="active site" evidence="1">
    <location>
        <position position="155"/>
    </location>
</feature>
<feature type="active site" evidence="1">
    <location>
        <position position="179"/>
    </location>
</feature>
<feature type="active site" evidence="1">
    <location>
        <position position="251"/>
    </location>
</feature>
<feature type="active site" evidence="1">
    <location>
        <position position="254"/>
    </location>
</feature>
<feature type="active site" evidence="1">
    <location>
        <position position="277"/>
    </location>
</feature>
<feature type="active site" description="O-(3'-phospho-DNA)-tyrosine intermediate" evidence="1">
    <location>
        <position position="286"/>
    </location>
</feature>
<keyword id="KW-0131">Cell cycle</keyword>
<keyword id="KW-0132">Cell division</keyword>
<keyword id="KW-0159">Chromosome partition</keyword>
<keyword id="KW-0963">Cytoplasm</keyword>
<keyword id="KW-0229">DNA integration</keyword>
<keyword id="KW-0233">DNA recombination</keyword>
<keyword id="KW-0238">DNA-binding</keyword>
<gene>
    <name evidence="1" type="primary">xerD</name>
    <name type="ordered locus">VV1_0530</name>
</gene>
<protein>
    <recommendedName>
        <fullName evidence="1">Tyrosine recombinase XerD</fullName>
    </recommendedName>
</protein>
<dbReference type="EMBL" id="AE016795">
    <property type="protein sequence ID" value="AAO09048.1"/>
    <property type="molecule type" value="Genomic_DNA"/>
</dbReference>
<dbReference type="RefSeq" id="WP_011078618.1">
    <property type="nucleotide sequence ID" value="NC_004459.3"/>
</dbReference>
<dbReference type="SMR" id="Q7ZAJ0"/>
<dbReference type="KEGG" id="vvu:VV1_0530"/>
<dbReference type="HOGENOM" id="CLU_027562_9_6_6"/>
<dbReference type="Proteomes" id="UP000002275">
    <property type="component" value="Chromosome 1"/>
</dbReference>
<dbReference type="GO" id="GO:0005737">
    <property type="term" value="C:cytoplasm"/>
    <property type="evidence" value="ECO:0007669"/>
    <property type="project" value="UniProtKB-SubCell"/>
</dbReference>
<dbReference type="GO" id="GO:0003677">
    <property type="term" value="F:DNA binding"/>
    <property type="evidence" value="ECO:0007669"/>
    <property type="project" value="UniProtKB-KW"/>
</dbReference>
<dbReference type="GO" id="GO:0009037">
    <property type="term" value="F:tyrosine-based site-specific recombinase activity"/>
    <property type="evidence" value="ECO:0007669"/>
    <property type="project" value="UniProtKB-UniRule"/>
</dbReference>
<dbReference type="GO" id="GO:0051301">
    <property type="term" value="P:cell division"/>
    <property type="evidence" value="ECO:0007669"/>
    <property type="project" value="UniProtKB-KW"/>
</dbReference>
<dbReference type="GO" id="GO:0007059">
    <property type="term" value="P:chromosome segregation"/>
    <property type="evidence" value="ECO:0007669"/>
    <property type="project" value="UniProtKB-UniRule"/>
</dbReference>
<dbReference type="GO" id="GO:0006313">
    <property type="term" value="P:DNA transposition"/>
    <property type="evidence" value="ECO:0007669"/>
    <property type="project" value="UniProtKB-UniRule"/>
</dbReference>
<dbReference type="CDD" id="cd00798">
    <property type="entry name" value="INT_XerDC_C"/>
    <property type="match status" value="1"/>
</dbReference>
<dbReference type="Gene3D" id="1.10.150.130">
    <property type="match status" value="1"/>
</dbReference>
<dbReference type="Gene3D" id="1.10.443.10">
    <property type="entry name" value="Intergrase catalytic core"/>
    <property type="match status" value="1"/>
</dbReference>
<dbReference type="HAMAP" id="MF_01808">
    <property type="entry name" value="Recomb_XerC_XerD"/>
    <property type="match status" value="1"/>
</dbReference>
<dbReference type="HAMAP" id="MF_01807">
    <property type="entry name" value="Recomb_XerD"/>
    <property type="match status" value="1"/>
</dbReference>
<dbReference type="InterPro" id="IPR044068">
    <property type="entry name" value="CB"/>
</dbReference>
<dbReference type="InterPro" id="IPR011010">
    <property type="entry name" value="DNA_brk_join_enz"/>
</dbReference>
<dbReference type="InterPro" id="IPR013762">
    <property type="entry name" value="Integrase-like_cat_sf"/>
</dbReference>
<dbReference type="InterPro" id="IPR002104">
    <property type="entry name" value="Integrase_catalytic"/>
</dbReference>
<dbReference type="InterPro" id="IPR010998">
    <property type="entry name" value="Integrase_recombinase_N"/>
</dbReference>
<dbReference type="InterPro" id="IPR004107">
    <property type="entry name" value="Integrase_SAM-like_N"/>
</dbReference>
<dbReference type="InterPro" id="IPR011932">
    <property type="entry name" value="Recomb_XerD"/>
</dbReference>
<dbReference type="InterPro" id="IPR023009">
    <property type="entry name" value="Tyrosine_recombinase_XerC/XerD"/>
</dbReference>
<dbReference type="InterPro" id="IPR050090">
    <property type="entry name" value="Tyrosine_recombinase_XerCD"/>
</dbReference>
<dbReference type="NCBIfam" id="NF001399">
    <property type="entry name" value="PRK00283.1"/>
    <property type="match status" value="1"/>
</dbReference>
<dbReference type="NCBIfam" id="TIGR02225">
    <property type="entry name" value="recomb_XerD"/>
    <property type="match status" value="1"/>
</dbReference>
<dbReference type="PANTHER" id="PTHR30349">
    <property type="entry name" value="PHAGE INTEGRASE-RELATED"/>
    <property type="match status" value="1"/>
</dbReference>
<dbReference type="PANTHER" id="PTHR30349:SF90">
    <property type="entry name" value="TYROSINE RECOMBINASE XERD"/>
    <property type="match status" value="1"/>
</dbReference>
<dbReference type="Pfam" id="PF02899">
    <property type="entry name" value="Phage_int_SAM_1"/>
    <property type="match status" value="1"/>
</dbReference>
<dbReference type="Pfam" id="PF00589">
    <property type="entry name" value="Phage_integrase"/>
    <property type="match status" value="1"/>
</dbReference>
<dbReference type="SUPFAM" id="SSF56349">
    <property type="entry name" value="DNA breaking-rejoining enzymes"/>
    <property type="match status" value="1"/>
</dbReference>
<dbReference type="SUPFAM" id="SSF47823">
    <property type="entry name" value="lambda integrase-like, N-terminal domain"/>
    <property type="match status" value="1"/>
</dbReference>
<dbReference type="PROSITE" id="PS51900">
    <property type="entry name" value="CB"/>
    <property type="match status" value="1"/>
</dbReference>
<dbReference type="PROSITE" id="PS51898">
    <property type="entry name" value="TYR_RECOMBINASE"/>
    <property type="match status" value="1"/>
</dbReference>
<proteinExistence type="inferred from homology"/>
<accession>Q7ZAJ0</accession>
<evidence type="ECO:0000255" key="1">
    <source>
        <dbReference type="HAMAP-Rule" id="MF_01807"/>
    </source>
</evidence>
<evidence type="ECO:0000255" key="2">
    <source>
        <dbReference type="PROSITE-ProRule" id="PRU01246"/>
    </source>
</evidence>
<evidence type="ECO:0000255" key="3">
    <source>
        <dbReference type="PROSITE-ProRule" id="PRU01248"/>
    </source>
</evidence>
<name>XERD_VIBVU</name>
<comment type="function">
    <text evidence="1">Site-specific tyrosine recombinase, which acts by catalyzing the cutting and rejoining of the recombining DNA molecules. The XerC-XerD complex is essential to convert dimers of the bacterial chromosome into monomers to permit their segregation at cell division. It also contributes to the segregational stability of plasmids.</text>
</comment>
<comment type="subunit">
    <text evidence="1">Forms a cyclic heterotetrameric complex composed of two molecules of XerC and two molecules of XerD.</text>
</comment>
<comment type="subcellular location">
    <subcellularLocation>
        <location evidence="1">Cytoplasm</location>
    </subcellularLocation>
</comment>
<comment type="similarity">
    <text evidence="1">Belongs to the 'phage' integrase family. XerD subfamily.</text>
</comment>
<reference key="1">
    <citation type="submission" date="2002-12" db="EMBL/GenBank/DDBJ databases">
        <title>Complete genome sequence of Vibrio vulnificus CMCP6.</title>
        <authorList>
            <person name="Rhee J.H."/>
            <person name="Kim S.Y."/>
            <person name="Chung S.S."/>
            <person name="Kim J.J."/>
            <person name="Moon Y.H."/>
            <person name="Jeong H."/>
            <person name="Choy H.E."/>
        </authorList>
    </citation>
    <scope>NUCLEOTIDE SEQUENCE [LARGE SCALE GENOMIC DNA]</scope>
    <source>
        <strain>CMCP6</strain>
    </source>
</reference>